<sequence>MLRKLTVDQINDWFTIGKTVTNVELLGLPPAFPAEAPREEVQRSEEVPNEDPTAQAQVPVKATAPARPASTSGRSLSQRSSEMEYINKYRQLEEQELDIYGQDQPPSGPGLRSPLAKLSNVACIPETTYKYPDLPINRCKEEVISLIESNSVVIIHGATGSGKSTQLPQYVLDHYTQRSAFCNIVVTQPRKIGASSIARWISKERSWTLGGLVGYQVGLEKIATEDTRLIYMTTGVLLQKIVSAKSLMEFTHIFIDEVHERTEEMDFLLLVVRKLLRTNSRFVKVVLMSATINCKQFADYFAVPVQNKMNPAYVFEVEGKPHAIEEYYLNDLGHIYHSGLPYRLEEPVITKDVYEVAVSLIQMFDDLDMKESGNKTWSGAQFVSERSSVLVFLPGLGEINYMHELLTNMIHKRLQVYPLHSSVTLEEQNNVFLSPVPGYRKIILSTNIAESSVTVPDVKYVIDFCLTRTLVCDEDTNYQSLRLSWASKTSCDQRKGRAGRVSKGYCYRLIPRDFWDSAIPDHVVPEMLRCPLGSTILKVKLLDMGEPRALLATALSPPSLSDIERTILLLKEVGALAVSGQREDENPHDGELTFLGRVLAQLPVSQQLGKLVVLGHVFGCLDECLIIAAALSLKNFFTMPFRQHLDGYRNKVHFSGSSRSDCLALVEAFRAWQACRQRGELRRPKDELDWGRLNYIQIKRIREVAELYEELKNRISQFNMFVGPHHPVLDQEYPYKQRFILQVVLAGAFYPNYFTFGQPDEEMAVRELAGKDPKTTVVLKHIPPYGFLYYKQLQSLFRQCGQVKSIVFDGAKAFVEFSRNPTERFKTLPAVNLAVKMSQLKVSLELSVHAAEEIEGKVQGGSVSKLRNTRVNVDFQKQTVDPMQVSFNTLDRPRTVADLLLTIDVTEVVEVGHFWGYRIDERNAELLKQLTAEINRLELVPLPIHPHPDLVCLAPFTDYNKESYFRAQILYVSGNSAEVFFVDYGNRSHVDLDLLREIPCQFLELPFQALEFKICKMRPSAKSLICGEHWSGGAHGRFAALVGGCPLLVKVFSIVHSVLHVDVYRYSGAQDAVNVRDVLIREGYAELAEESYESKQSYEVLKGFFAKSVDTMPDGSVSSPLKDDEKHLLRILLESFASNRLGAPNCKAVLHGPFNPYELKCHSLTRISKFRCVWIEKESINSVVISDSPADLHQRMLVAASLSVNETGSTMLLRETSLMPHIPGLPALLSMLFAPVMELRVDREGKCYTGVLCGLGWNSATEAPILPEHDIELAFDVRLNVEDIVEINILRAAINKLVCDGPNGSKYLGPERIAQLQENARQKLLGLFCRLKPREKITPQWHEKPYEWNQVDPRLIMEQAEPEGSPGKSTSLYQLHTPVVLSP</sequence>
<feature type="chain" id="PRO_0000333814" description="ATP-dependent RNA helicase TDRD9">
    <location>
        <begin position="1"/>
        <end position="1383"/>
    </location>
</feature>
<feature type="domain" description="Helicase ATP-binding" evidence="2">
    <location>
        <begin position="144"/>
        <end position="310"/>
    </location>
</feature>
<feature type="domain" description="Helicase C-terminal" evidence="3">
    <location>
        <begin position="378"/>
        <end position="545"/>
    </location>
</feature>
<feature type="domain" description="Tudor" evidence="1">
    <location>
        <begin position="945"/>
        <end position="1005"/>
    </location>
</feature>
<feature type="region of interest" description="Disordered" evidence="4">
    <location>
        <begin position="35"/>
        <end position="82"/>
    </location>
</feature>
<feature type="short sequence motif" description="DEAH box" evidence="8">
    <location>
        <begin position="256"/>
        <end position="259"/>
    </location>
</feature>
<feature type="compositionally biased region" description="Basic and acidic residues" evidence="4">
    <location>
        <begin position="36"/>
        <end position="46"/>
    </location>
</feature>
<feature type="compositionally biased region" description="Low complexity" evidence="4">
    <location>
        <begin position="70"/>
        <end position="80"/>
    </location>
</feature>
<feature type="binding site" evidence="2">
    <location>
        <begin position="157"/>
        <end position="164"/>
    </location>
    <ligand>
        <name>ATP</name>
        <dbReference type="ChEBI" id="CHEBI:30616"/>
    </ligand>
</feature>
<feature type="splice variant" id="VSP_033553" description="In isoform 3." evidence="9">
    <location>
        <begin position="1"/>
        <end position="772"/>
    </location>
</feature>
<feature type="splice variant" id="VSP_033554" description="In isoform 2." evidence="9">
    <location>
        <begin position="1"/>
        <end position="401"/>
    </location>
</feature>
<feature type="splice variant" id="VSP_033555" description="In isoform 3." evidence="9">
    <original>PKTTVVLKHIPPYGFLYYKQLQSLFRQCGQVKSIVFDGAKA</original>
    <variation>MDIGTKCTSQVAAGVTAWHLWRRSGPGRLADSEESCGVPRA</variation>
    <location>
        <begin position="773"/>
        <end position="813"/>
    </location>
</feature>
<feature type="mutagenesis site" description="In Tdrd9(KI); heterozygous and homozygous knockin male mice are infertile due to derepression of transposable elements. PiRNA biogenesis in not affected but piRNAs fail to accumulate in the nucleus." evidence="8">
    <original>E</original>
    <variation>Q</variation>
    <location>
        <position position="257"/>
    </location>
</feature>
<gene>
    <name evidence="12" type="primary">Tdrd9</name>
</gene>
<name>TDRD9_MOUSE</name>
<protein>
    <recommendedName>
        <fullName evidence="10">ATP-dependent RNA helicase TDRD9</fullName>
        <ecNumber evidence="11">3.6.4.13</ecNumber>
    </recommendedName>
    <alternativeName>
        <fullName evidence="10">Tudor domain-containing protein 9</fullName>
    </alternativeName>
</protein>
<keyword id="KW-0025">Alternative splicing</keyword>
<keyword id="KW-0067">ATP-binding</keyword>
<keyword id="KW-0963">Cytoplasm</keyword>
<keyword id="KW-0217">Developmental protein</keyword>
<keyword id="KW-0221">Differentiation</keyword>
<keyword id="KW-0347">Helicase</keyword>
<keyword id="KW-0378">Hydrolase</keyword>
<keyword id="KW-0469">Meiosis</keyword>
<keyword id="KW-0547">Nucleotide-binding</keyword>
<keyword id="KW-0539">Nucleus</keyword>
<keyword id="KW-1185">Reference proteome</keyword>
<keyword id="KW-0943">RNA-mediated gene silencing</keyword>
<keyword id="KW-0744">Spermatogenesis</keyword>
<reference key="1">
    <citation type="submission" date="2007-09" db="EMBL/GenBank/DDBJ databases">
        <title>Regulation of retroelement expression and genome dna methylation through conserved TDRD9/SPN-E function in the germline.</title>
        <authorList>
            <person name="Shoji M."/>
            <person name="Tanaka T."/>
            <person name="Kitamura K."/>
            <person name="Hosokawa M."/>
            <person name="Kato Y."/>
            <person name="Kondoh G."/>
            <person name="Okawa K."/>
            <person name="Sasaki H."/>
            <person name="Chuma S."/>
            <person name="Nakatsuji N."/>
        </authorList>
    </citation>
    <scope>NUCLEOTIDE SEQUENCE [MRNA] (ISOFORM 1)</scope>
    <source>
        <tissue>Testis</tissue>
    </source>
</reference>
<reference key="2">
    <citation type="journal article" date="2009" name="PLoS Biol.">
        <title>Lineage-specific biology revealed by a finished genome assembly of the mouse.</title>
        <authorList>
            <person name="Church D.M."/>
            <person name="Goodstadt L."/>
            <person name="Hillier L.W."/>
            <person name="Zody M.C."/>
            <person name="Goldstein S."/>
            <person name="She X."/>
            <person name="Bult C.J."/>
            <person name="Agarwala R."/>
            <person name="Cherry J.L."/>
            <person name="DiCuccio M."/>
            <person name="Hlavina W."/>
            <person name="Kapustin Y."/>
            <person name="Meric P."/>
            <person name="Maglott D."/>
            <person name="Birtle Z."/>
            <person name="Marques A.C."/>
            <person name="Graves T."/>
            <person name="Zhou S."/>
            <person name="Teague B."/>
            <person name="Potamousis K."/>
            <person name="Churas C."/>
            <person name="Place M."/>
            <person name="Herschleb J."/>
            <person name="Runnheim R."/>
            <person name="Forrest D."/>
            <person name="Amos-Landgraf J."/>
            <person name="Schwartz D.C."/>
            <person name="Cheng Z."/>
            <person name="Lindblad-Toh K."/>
            <person name="Eichler E.E."/>
            <person name="Ponting C.P."/>
        </authorList>
    </citation>
    <scope>NUCLEOTIDE SEQUENCE [LARGE SCALE GENOMIC DNA]</scope>
    <source>
        <strain>C57BL/6J</strain>
    </source>
</reference>
<reference key="3">
    <citation type="journal article" date="2004" name="Genome Res.">
        <title>The status, quality, and expansion of the NIH full-length cDNA project: the Mammalian Gene Collection (MGC).</title>
        <authorList>
            <consortium name="The MGC Project Team"/>
        </authorList>
    </citation>
    <scope>NUCLEOTIDE SEQUENCE [LARGE SCALE MRNA] (ISOFORMS 2 AND 3)</scope>
</reference>
<reference key="4">
    <citation type="journal article" date="2009" name="Dev. Cell">
        <title>The TDRD9-MIWI2 complex is essential for piRNA-mediated retrotransposon silencing in the mouse male germline.</title>
        <authorList>
            <person name="Shoji M."/>
            <person name="Tanaka T."/>
            <person name="Hosokawa M."/>
            <person name="Reuter M."/>
            <person name="Stark A."/>
            <person name="Kato Y."/>
            <person name="Kondoh G."/>
            <person name="Okawa K."/>
            <person name="Chujo T."/>
            <person name="Suzuki T."/>
            <person name="Hata K."/>
            <person name="Martin S.L."/>
            <person name="Noce T."/>
            <person name="Kuramochi-Miyagawa S."/>
            <person name="Nakano T."/>
            <person name="Sasaki H."/>
            <person name="Pillai R.S."/>
            <person name="Nakatsuji N."/>
            <person name="Chuma S."/>
        </authorList>
    </citation>
    <scope>FUNCTION</scope>
    <scope>SUBCELLULAR LOCATION</scope>
    <scope>DISRUPTION PHENOTYPE</scope>
    <scope>TISSUE SPECIFICITY</scope>
    <scope>INTERACTION WITH PIWIL4</scope>
</reference>
<reference key="5">
    <citation type="journal article" date="2009" name="Genes Dev.">
        <title>Proteomic analysis of murine Piwi proteins reveals a role for arginine methylation in specifying interaction with Tudor family members.</title>
        <authorList>
            <person name="Vagin V.V."/>
            <person name="Wohlschlegel J."/>
            <person name="Qu J."/>
            <person name="Jonsson Z."/>
            <person name="Huang X."/>
            <person name="Chuma S."/>
            <person name="Girard A."/>
            <person name="Sachidanandam R."/>
            <person name="Hannon G.J."/>
            <person name="Aravin A.A."/>
        </authorList>
    </citation>
    <scope>INTERACTION WITH PIWIL1 AND PIWIL4</scope>
</reference>
<reference key="6">
    <citation type="journal article" date="2009" name="PLoS Genet.">
        <title>Cytoplasmic compartmentalization of the fetal piRNA pathway in mice.</title>
        <authorList>
            <person name="Aravin A.A."/>
            <person name="van der Heijden G.W."/>
            <person name="Castaneda J."/>
            <person name="Vagin V.V."/>
            <person name="Hannon G.J."/>
            <person name="Bortvin A."/>
        </authorList>
    </citation>
    <scope>SUBCELLULAR LOCATION</scope>
</reference>
<reference key="7">
    <citation type="journal article" date="2010" name="Cell">
        <title>A tissue-specific atlas of mouse protein phosphorylation and expression.</title>
        <authorList>
            <person name="Huttlin E.L."/>
            <person name="Jedrychowski M.P."/>
            <person name="Elias J.E."/>
            <person name="Goswami T."/>
            <person name="Rad R."/>
            <person name="Beausoleil S.A."/>
            <person name="Villen J."/>
            <person name="Haas W."/>
            <person name="Sowa M.E."/>
            <person name="Gygi S.P."/>
        </authorList>
    </citation>
    <scope>IDENTIFICATION BY MASS SPECTROMETRY [LARGE SCALE ANALYSIS]</scope>
    <source>
        <tissue>Testis</tissue>
    </source>
</reference>
<reference key="8">
    <citation type="journal article" date="2017" name="Dev. Cell">
        <title>Distinct roles of RNA helicases MVH and TDRD9 in PIWI slicing-triggered mammalian piRNA biogenesis and function.</title>
        <authorList>
            <person name="Wenda J.M."/>
            <person name="Homolka D."/>
            <person name="Yang Z."/>
            <person name="Spinelli P."/>
            <person name="Sachidanandam R."/>
            <person name="Pandey R.R."/>
            <person name="Pillai R.S."/>
        </authorList>
    </citation>
    <scope>FUNCTION</scope>
    <scope>CATALYTIC ACTIVITY</scope>
    <scope>SUBCELLULAR LOCATION</scope>
    <scope>MUTAGENESIS OF GLU-257</scope>
</reference>
<accession>Q14BI7</accession>
<accession>B1Q3J8</accession>
<accession>Q14AW6</accession>
<evidence type="ECO:0000255" key="1">
    <source>
        <dbReference type="PROSITE-ProRule" id="PRU00211"/>
    </source>
</evidence>
<evidence type="ECO:0000255" key="2">
    <source>
        <dbReference type="PROSITE-ProRule" id="PRU00541"/>
    </source>
</evidence>
<evidence type="ECO:0000255" key="3">
    <source>
        <dbReference type="PROSITE-ProRule" id="PRU00542"/>
    </source>
</evidence>
<evidence type="ECO:0000256" key="4">
    <source>
        <dbReference type="SAM" id="MobiDB-lite"/>
    </source>
</evidence>
<evidence type="ECO:0000269" key="5">
    <source>
    </source>
</evidence>
<evidence type="ECO:0000269" key="6">
    <source>
    </source>
</evidence>
<evidence type="ECO:0000269" key="7">
    <source>
    </source>
</evidence>
<evidence type="ECO:0000269" key="8">
    <source>
    </source>
</evidence>
<evidence type="ECO:0000303" key="9">
    <source>
    </source>
</evidence>
<evidence type="ECO:0000305" key="10"/>
<evidence type="ECO:0000305" key="11">
    <source>
    </source>
</evidence>
<evidence type="ECO:0000312" key="12">
    <source>
        <dbReference type="MGI" id="MGI:1921941"/>
    </source>
</evidence>
<dbReference type="EC" id="3.6.4.13" evidence="11"/>
<dbReference type="EMBL" id="AB362563">
    <property type="protein sequence ID" value="BAG15992.1"/>
    <property type="molecule type" value="mRNA"/>
</dbReference>
<dbReference type="EMBL" id="AC112520">
    <property type="status" value="NOT_ANNOTATED_CDS"/>
    <property type="molecule type" value="Genomic_DNA"/>
</dbReference>
<dbReference type="EMBL" id="AC132623">
    <property type="status" value="NOT_ANNOTATED_CDS"/>
    <property type="molecule type" value="Genomic_DNA"/>
</dbReference>
<dbReference type="EMBL" id="BC115831">
    <property type="protein sequence ID" value="AAI15832.1"/>
    <property type="molecule type" value="mRNA"/>
</dbReference>
<dbReference type="EMBL" id="BC116656">
    <property type="protein sequence ID" value="AAI16657.1"/>
    <property type="molecule type" value="mRNA"/>
</dbReference>
<dbReference type="CCDS" id="CCDS49184.1">
    <molecule id="Q14BI7-1"/>
</dbReference>
<dbReference type="RefSeq" id="NP_083332.1">
    <molecule id="Q14BI7-1"/>
    <property type="nucleotide sequence ID" value="NM_029056.1"/>
</dbReference>
<dbReference type="RefSeq" id="XP_006516384.1">
    <molecule id="Q14BI7-2"/>
    <property type="nucleotide sequence ID" value="XM_006516321.3"/>
</dbReference>
<dbReference type="SMR" id="Q14BI7"/>
<dbReference type="BioGRID" id="216946">
    <property type="interactions" value="1"/>
</dbReference>
<dbReference type="FunCoup" id="Q14BI7">
    <property type="interactions" value="789"/>
</dbReference>
<dbReference type="IntAct" id="Q14BI7">
    <property type="interactions" value="1"/>
</dbReference>
<dbReference type="STRING" id="10090.ENSMUSP00000078022"/>
<dbReference type="GlyGen" id="Q14BI7">
    <property type="glycosylation" value="1 site, 1 O-linked glycan (1 site)"/>
</dbReference>
<dbReference type="iPTMnet" id="Q14BI7"/>
<dbReference type="PhosphoSitePlus" id="Q14BI7"/>
<dbReference type="SwissPalm" id="Q14BI7"/>
<dbReference type="PaxDb" id="10090-ENSMUSP00000078022"/>
<dbReference type="ProteomicsDB" id="254688">
    <molecule id="Q14BI7-1"/>
</dbReference>
<dbReference type="ProteomicsDB" id="254689">
    <molecule id="Q14BI7-2"/>
</dbReference>
<dbReference type="ProteomicsDB" id="254690">
    <molecule id="Q14BI7-3"/>
</dbReference>
<dbReference type="Antibodypedia" id="47449">
    <property type="antibodies" value="68 antibodies from 15 providers"/>
</dbReference>
<dbReference type="Ensembl" id="ENSMUST00000079009.11">
    <molecule id="Q14BI7-1"/>
    <property type="protein sequence ID" value="ENSMUSP00000078022.6"/>
    <property type="gene ID" value="ENSMUSG00000054003.14"/>
</dbReference>
<dbReference type="GeneID" id="74691"/>
<dbReference type="KEGG" id="mmu:74691"/>
<dbReference type="UCSC" id="uc007pei.1">
    <molecule id="Q14BI7-1"/>
    <property type="organism name" value="mouse"/>
</dbReference>
<dbReference type="UCSC" id="uc007pej.1">
    <molecule id="Q14BI7-3"/>
    <property type="organism name" value="mouse"/>
</dbReference>
<dbReference type="AGR" id="MGI:1921941"/>
<dbReference type="CTD" id="122402"/>
<dbReference type="MGI" id="MGI:1921941">
    <property type="gene designation" value="Tdrd9"/>
</dbReference>
<dbReference type="VEuPathDB" id="HostDB:ENSMUSG00000054003"/>
<dbReference type="eggNOG" id="KOG0920">
    <property type="taxonomic scope" value="Eukaryota"/>
</dbReference>
<dbReference type="GeneTree" id="ENSGT00940000157035"/>
<dbReference type="HOGENOM" id="CLU_002601_1_0_1"/>
<dbReference type="InParanoid" id="Q14BI7"/>
<dbReference type="OMA" id="QRSAYCS"/>
<dbReference type="OrthoDB" id="66977at2759"/>
<dbReference type="PhylomeDB" id="Q14BI7"/>
<dbReference type="TreeFam" id="TF324869"/>
<dbReference type="BioGRID-ORCS" id="74691">
    <property type="hits" value="1 hit in 80 CRISPR screens"/>
</dbReference>
<dbReference type="CD-CODE" id="DE1E139C">
    <property type="entry name" value="Chromatoid body"/>
</dbReference>
<dbReference type="ChiTaRS" id="Tdrd9">
    <property type="organism name" value="mouse"/>
</dbReference>
<dbReference type="PRO" id="PR:Q14BI7"/>
<dbReference type="Proteomes" id="UP000000589">
    <property type="component" value="Chromosome 12"/>
</dbReference>
<dbReference type="RNAct" id="Q14BI7">
    <property type="molecule type" value="protein"/>
</dbReference>
<dbReference type="Bgee" id="ENSMUSG00000054003">
    <property type="expression patterns" value="Expressed in spermatocyte and 45 other cell types or tissues"/>
</dbReference>
<dbReference type="ExpressionAtlas" id="Q14BI7">
    <property type="expression patterns" value="baseline and differential"/>
</dbReference>
<dbReference type="GO" id="GO:0005829">
    <property type="term" value="C:cytosol"/>
    <property type="evidence" value="ECO:0000304"/>
    <property type="project" value="Reactome"/>
</dbReference>
<dbReference type="GO" id="GO:0005654">
    <property type="term" value="C:nucleoplasm"/>
    <property type="evidence" value="ECO:0000304"/>
    <property type="project" value="Reactome"/>
</dbReference>
<dbReference type="GO" id="GO:0005634">
    <property type="term" value="C:nucleus"/>
    <property type="evidence" value="ECO:0000314"/>
    <property type="project" value="UniProtKB"/>
</dbReference>
<dbReference type="GO" id="GO:0071547">
    <property type="term" value="C:piP-body"/>
    <property type="evidence" value="ECO:0000314"/>
    <property type="project" value="UniProtKB"/>
</dbReference>
<dbReference type="GO" id="GO:0005524">
    <property type="term" value="F:ATP binding"/>
    <property type="evidence" value="ECO:0007669"/>
    <property type="project" value="UniProtKB-KW"/>
</dbReference>
<dbReference type="GO" id="GO:0016887">
    <property type="term" value="F:ATP hydrolysis activity"/>
    <property type="evidence" value="ECO:0000315"/>
    <property type="project" value="UniProtKB"/>
</dbReference>
<dbReference type="GO" id="GO:0003676">
    <property type="term" value="F:nucleic acid binding"/>
    <property type="evidence" value="ECO:0007669"/>
    <property type="project" value="InterPro"/>
</dbReference>
<dbReference type="GO" id="GO:0003724">
    <property type="term" value="F:RNA helicase activity"/>
    <property type="evidence" value="ECO:0007669"/>
    <property type="project" value="UniProtKB-EC"/>
</dbReference>
<dbReference type="GO" id="GO:0030154">
    <property type="term" value="P:cell differentiation"/>
    <property type="evidence" value="ECO:0007669"/>
    <property type="project" value="UniProtKB-KW"/>
</dbReference>
<dbReference type="GO" id="GO:0009566">
    <property type="term" value="P:fertilization"/>
    <property type="evidence" value="ECO:0000315"/>
    <property type="project" value="UniProtKB"/>
</dbReference>
<dbReference type="GO" id="GO:0007141">
    <property type="term" value="P:male meiosis I"/>
    <property type="evidence" value="ECO:0000315"/>
    <property type="project" value="UniProtKB"/>
</dbReference>
<dbReference type="GO" id="GO:0007140">
    <property type="term" value="P:male meiotic nuclear division"/>
    <property type="evidence" value="ECO:0000315"/>
    <property type="project" value="UniProtKB"/>
</dbReference>
<dbReference type="GO" id="GO:0034587">
    <property type="term" value="P:piRNA processing"/>
    <property type="evidence" value="ECO:0000315"/>
    <property type="project" value="UniProtKB"/>
</dbReference>
<dbReference type="GO" id="GO:0007283">
    <property type="term" value="P:spermatogenesis"/>
    <property type="evidence" value="ECO:0000315"/>
    <property type="project" value="UniProtKB"/>
</dbReference>
<dbReference type="GO" id="GO:0010526">
    <property type="term" value="P:transposable element silencing"/>
    <property type="evidence" value="ECO:0000315"/>
    <property type="project" value="MGI"/>
</dbReference>
<dbReference type="GO" id="GO:0141196">
    <property type="term" value="P:transposable element silencing by piRNA-mediated DNA methylation"/>
    <property type="evidence" value="ECO:0000315"/>
    <property type="project" value="UniProtKB"/>
</dbReference>
<dbReference type="GO" id="GO:0141006">
    <property type="term" value="P:transposable element silencing by piRNA-mediated heterochromatin formation"/>
    <property type="evidence" value="ECO:0000315"/>
    <property type="project" value="UniProtKB"/>
</dbReference>
<dbReference type="CDD" id="cd18791">
    <property type="entry name" value="SF2_C_RHA"/>
    <property type="match status" value="1"/>
</dbReference>
<dbReference type="CDD" id="cd20431">
    <property type="entry name" value="Tudor_TDRD9"/>
    <property type="match status" value="1"/>
</dbReference>
<dbReference type="FunFam" id="2.30.30.140:FF:000073">
    <property type="entry name" value="ATP-dependent RNA helicase TDRD9"/>
    <property type="match status" value="1"/>
</dbReference>
<dbReference type="FunFam" id="3.40.50.300:FF:001113">
    <property type="entry name" value="ATP-dependent RNA helicase TDRD9"/>
    <property type="match status" value="1"/>
</dbReference>
<dbReference type="FunFam" id="1.20.120.1080:FF:000012">
    <property type="entry name" value="putative ATP-dependent RNA helicase TDRD9"/>
    <property type="match status" value="1"/>
</dbReference>
<dbReference type="FunFam" id="3.40.50.300:FF:000946">
    <property type="entry name" value="putative ATP-dependent RNA helicase TDRD9"/>
    <property type="match status" value="1"/>
</dbReference>
<dbReference type="FunFam" id="2.40.50.90:FF:000016">
    <property type="entry name" value="Tudor domain containing 9"/>
    <property type="match status" value="1"/>
</dbReference>
<dbReference type="Gene3D" id="1.20.120.1080">
    <property type="match status" value="1"/>
</dbReference>
<dbReference type="Gene3D" id="2.30.30.140">
    <property type="match status" value="1"/>
</dbReference>
<dbReference type="Gene3D" id="2.40.50.90">
    <property type="match status" value="1"/>
</dbReference>
<dbReference type="Gene3D" id="3.40.50.300">
    <property type="entry name" value="P-loop containing nucleotide triphosphate hydrolases"/>
    <property type="match status" value="2"/>
</dbReference>
<dbReference type="InterPro" id="IPR011545">
    <property type="entry name" value="DEAD/DEAH_box_helicase_dom"/>
</dbReference>
<dbReference type="InterPro" id="IPR007502">
    <property type="entry name" value="Helicase-assoc_dom"/>
</dbReference>
<dbReference type="InterPro" id="IPR014001">
    <property type="entry name" value="Helicase_ATP-bd"/>
</dbReference>
<dbReference type="InterPro" id="IPR001650">
    <property type="entry name" value="Helicase_C-like"/>
</dbReference>
<dbReference type="InterPro" id="IPR027417">
    <property type="entry name" value="P-loop_NTPase"/>
</dbReference>
<dbReference type="InterPro" id="IPR035437">
    <property type="entry name" value="SNase_OB-fold_sf"/>
</dbReference>
<dbReference type="InterPro" id="IPR002999">
    <property type="entry name" value="Tudor"/>
</dbReference>
<dbReference type="InterPro" id="IPR047384">
    <property type="entry name" value="Tudor_TDRD9"/>
</dbReference>
<dbReference type="PANTHER" id="PTHR18934">
    <property type="entry name" value="ATP-DEPENDENT RNA HELICASE"/>
    <property type="match status" value="1"/>
</dbReference>
<dbReference type="PANTHER" id="PTHR18934:SF113">
    <property type="entry name" value="ATP-DEPENDENT RNA HELICASE TDRD9"/>
    <property type="match status" value="1"/>
</dbReference>
<dbReference type="Pfam" id="PF00270">
    <property type="entry name" value="DEAD"/>
    <property type="match status" value="1"/>
</dbReference>
<dbReference type="Pfam" id="PF21010">
    <property type="entry name" value="HA2_C"/>
    <property type="match status" value="1"/>
</dbReference>
<dbReference type="Pfam" id="PF00271">
    <property type="entry name" value="Helicase_C"/>
    <property type="match status" value="1"/>
</dbReference>
<dbReference type="Pfam" id="PF00567">
    <property type="entry name" value="TUDOR"/>
    <property type="match status" value="1"/>
</dbReference>
<dbReference type="SMART" id="SM00487">
    <property type="entry name" value="DEXDc"/>
    <property type="match status" value="1"/>
</dbReference>
<dbReference type="SMART" id="SM00847">
    <property type="entry name" value="HA2"/>
    <property type="match status" value="1"/>
</dbReference>
<dbReference type="SMART" id="SM00490">
    <property type="entry name" value="HELICc"/>
    <property type="match status" value="1"/>
</dbReference>
<dbReference type="SMART" id="SM00333">
    <property type="entry name" value="TUDOR"/>
    <property type="match status" value="1"/>
</dbReference>
<dbReference type="SUPFAM" id="SSF52540">
    <property type="entry name" value="P-loop containing nucleoside triphosphate hydrolases"/>
    <property type="match status" value="1"/>
</dbReference>
<dbReference type="SUPFAM" id="SSF63748">
    <property type="entry name" value="Tudor/PWWP/MBT"/>
    <property type="match status" value="1"/>
</dbReference>
<dbReference type="PROSITE" id="PS51192">
    <property type="entry name" value="HELICASE_ATP_BIND_1"/>
    <property type="match status" value="1"/>
</dbReference>
<dbReference type="PROSITE" id="PS51194">
    <property type="entry name" value="HELICASE_CTER"/>
    <property type="match status" value="1"/>
</dbReference>
<dbReference type="PROSITE" id="PS50304">
    <property type="entry name" value="TUDOR"/>
    <property type="match status" value="1"/>
</dbReference>
<comment type="function">
    <text evidence="7 8">ATP-binding RNA helicase which plays a central role during spermatogenesis by repressing transposable elements and preventing their mobilization, which is essential for the germline integrity (PubMed:20059948, PubMed:28633017). Acts via the piRNA metabolic process, which mediates the repression of transposable elements during meiosis by forming complexes composed of piRNAs and Piwi proteins and governs the methylation and subsequent repression of transposons (PubMed:20059948, PubMed:28633017). Acts downstream of piRNA biogenesis: exclusively required for transposon silencing in the nucleus, suggesting that it acts as a nuclear effector in the nucleus together with PIWIL4 (PubMed:28633017).</text>
</comment>
<comment type="catalytic activity">
    <reaction evidence="11">
        <text>ATP + H2O = ADP + phosphate + H(+)</text>
        <dbReference type="Rhea" id="RHEA:13065"/>
        <dbReference type="ChEBI" id="CHEBI:15377"/>
        <dbReference type="ChEBI" id="CHEBI:15378"/>
        <dbReference type="ChEBI" id="CHEBI:30616"/>
        <dbReference type="ChEBI" id="CHEBI:43474"/>
        <dbReference type="ChEBI" id="CHEBI:456216"/>
        <dbReference type="EC" id="3.6.4.13"/>
    </reaction>
</comment>
<comment type="subunit">
    <text evidence="5 7">Interacts with piRNA-associated proteins PIWIL1 and PIWIL4.</text>
</comment>
<comment type="subcellular location">
    <subcellularLocation>
        <location evidence="6 7 8">Cytoplasm</location>
    </subcellularLocation>
    <subcellularLocation>
        <location evidence="7 8">Nucleus</location>
    </subcellularLocation>
    <text evidence="7">Component of the nuage, also named P granule, a germ-cell-specific organelle required to repress transposon activity during meiosis. Specifically localizes to piP-bodies, a subset of the nuage which contains secondary piRNAs. PIWIL2 is required for its localization to piP-bodies.</text>
</comment>
<comment type="alternative products">
    <event type="alternative splicing"/>
    <isoform>
        <id>Q14BI7-1</id>
        <name>1</name>
        <sequence type="displayed"/>
    </isoform>
    <isoform>
        <id>Q14BI7-2</id>
        <name>2</name>
        <sequence type="described" ref="VSP_033554"/>
    </isoform>
    <isoform>
        <id>Q14BI7-3</id>
        <name>3</name>
        <sequence type="described" ref="VSP_033553 VSP_033555"/>
    </isoform>
</comment>
<comment type="tissue specificity">
    <text evidence="7">Predominantly expressed in reproductive organs. Detected in mitotic spermatogonia, meiotic spermatocytes (predominantly at the pachytene stage), haploid spermatids in the testis, and in growing oocytes in the ovary (at protein level).</text>
</comment>
<comment type="disruption phenotype">
    <text evidence="7">Mice are viable but show male sterility with chromosome synapsis failure. In fetal testes, LINE-1 (L1) transposable elements derepression and an aberrant piRNA profile in prospermatogonia, followed by cognate DNA demethylation are observed.</text>
</comment>
<comment type="similarity">
    <text evidence="10">Belongs to the DEAD box helicase family. DEAH subfamily.</text>
</comment>
<proteinExistence type="evidence at protein level"/>
<organism>
    <name type="scientific">Mus musculus</name>
    <name type="common">Mouse</name>
    <dbReference type="NCBI Taxonomy" id="10090"/>
    <lineage>
        <taxon>Eukaryota</taxon>
        <taxon>Metazoa</taxon>
        <taxon>Chordata</taxon>
        <taxon>Craniata</taxon>
        <taxon>Vertebrata</taxon>
        <taxon>Euteleostomi</taxon>
        <taxon>Mammalia</taxon>
        <taxon>Eutheria</taxon>
        <taxon>Euarchontoglires</taxon>
        <taxon>Glires</taxon>
        <taxon>Rodentia</taxon>
        <taxon>Myomorpha</taxon>
        <taxon>Muroidea</taxon>
        <taxon>Muridae</taxon>
        <taxon>Murinae</taxon>
        <taxon>Mus</taxon>
        <taxon>Mus</taxon>
    </lineage>
</organism>